<reference key="1">
    <citation type="journal article" date="2005" name="Nature">
        <title>The map-based sequence of the rice genome.</title>
        <authorList>
            <consortium name="International rice genome sequencing project (IRGSP)"/>
        </authorList>
    </citation>
    <scope>NUCLEOTIDE SEQUENCE [LARGE SCALE GENOMIC DNA]</scope>
    <source>
        <strain>cv. Nipponbare</strain>
    </source>
</reference>
<reference key="2">
    <citation type="journal article" date="2008" name="Nucleic Acids Res.">
        <title>The rice annotation project database (RAP-DB): 2008 update.</title>
        <authorList>
            <consortium name="The rice annotation project (RAP)"/>
        </authorList>
    </citation>
    <scope>GENOME REANNOTATION</scope>
    <source>
        <strain>cv. Nipponbare</strain>
    </source>
</reference>
<reference key="3">
    <citation type="journal article" date="2013" name="Rice">
        <title>Improvement of the Oryza sativa Nipponbare reference genome using next generation sequence and optical map data.</title>
        <authorList>
            <person name="Kawahara Y."/>
            <person name="de la Bastide M."/>
            <person name="Hamilton J.P."/>
            <person name="Kanamori H."/>
            <person name="McCombie W.R."/>
            <person name="Ouyang S."/>
            <person name="Schwartz D.C."/>
            <person name="Tanaka T."/>
            <person name="Wu J."/>
            <person name="Zhou S."/>
            <person name="Childs K.L."/>
            <person name="Davidson R.M."/>
            <person name="Lin H."/>
            <person name="Quesada-Ocampo L."/>
            <person name="Vaillancourt B."/>
            <person name="Sakai H."/>
            <person name="Lee S.S."/>
            <person name="Kim J."/>
            <person name="Numa H."/>
            <person name="Itoh T."/>
            <person name="Buell C.R."/>
            <person name="Matsumoto T."/>
        </authorList>
    </citation>
    <scope>GENOME REANNOTATION</scope>
    <source>
        <strain>cv. Nipponbare</strain>
    </source>
</reference>
<reference key="4">
    <citation type="journal article" date="2006" name="Plant Physiol.">
        <title>Genome-wide analysis of basic/helix-loop-helix transcription factor family in rice and Arabidopsis.</title>
        <authorList>
            <person name="Li X."/>
            <person name="Duan X."/>
            <person name="Jiang H."/>
            <person name="Sun Y."/>
            <person name="Tang Y."/>
            <person name="Yuan Z."/>
            <person name="Guo J."/>
            <person name="Liang W."/>
            <person name="Chen L."/>
            <person name="Yin J."/>
            <person name="Ma H."/>
            <person name="Wang J."/>
            <person name="Zhang D."/>
        </authorList>
    </citation>
    <scope>GENE FAMILY</scope>
    <scope>NOMENCLATURE</scope>
</reference>
<reference key="5">
    <citation type="journal article" date="2013" name="Plant Cell">
        <title>RICE SALT SENSITIVE3 forms a ternary complex with JAZ and class-C bHLH factors and regulates jasmonate-induced gene expression and root cell elongation.</title>
        <authorList>
            <person name="Toda Y."/>
            <person name="Tanaka M."/>
            <person name="Ogawa D."/>
            <person name="Kurata K."/>
            <person name="Kurotani K."/>
            <person name="Habu Y."/>
            <person name="Ando T."/>
            <person name="Sugimoto K."/>
            <person name="Mitsuda N."/>
            <person name="Katoh E."/>
            <person name="Abe K."/>
            <person name="Miyao A."/>
            <person name="Hirochika H."/>
            <person name="Hattori T."/>
            <person name="Takeda S."/>
        </authorList>
    </citation>
    <scope>FUNCTION</scope>
    <scope>INTERACTION WITH RSS3</scope>
    <scope>SUBUNIT</scope>
    <scope>SUBCELLULAR LOCATION</scope>
    <source>
        <strain>cv. Nipponbare</strain>
    </source>
</reference>
<gene>
    <name evidence="4" type="primary">BHLH094</name>
    <name evidence="7" type="ordered locus">Os07g0193800</name>
    <name evidence="5" type="ordered locus">LOC_Os07g09590</name>
    <name evidence="6" type="ORF">OJ1118_E12.15</name>
</gene>
<feature type="chain" id="PRO_0000440332" description="Transcription factor BHLH094">
    <location>
        <begin position="1"/>
        <end position="256"/>
    </location>
</feature>
<feature type="domain" description="bHLH" evidence="1">
    <location>
        <begin position="134"/>
        <end position="184"/>
    </location>
</feature>
<feature type="region of interest" description="Disordered" evidence="2">
    <location>
        <begin position="1"/>
        <end position="125"/>
    </location>
</feature>
<feature type="region of interest" description="Basic motif; degenerate" evidence="1">
    <location>
        <begin position="134"/>
        <end position="147"/>
    </location>
</feature>
<feature type="region of interest" description="Helix-loop-helix motif" evidence="1">
    <location>
        <begin position="148"/>
        <end position="184"/>
    </location>
</feature>
<feature type="compositionally biased region" description="Basic and acidic residues" evidence="2">
    <location>
        <begin position="79"/>
        <end position="97"/>
    </location>
</feature>
<comment type="function">
    <text evidence="3">Transcription factor that forms a ternary complex with RSS3 and TIFY11A/JAZ9 to negatively regulate jasmonate-responsive genes.</text>
</comment>
<comment type="subunit">
    <text evidence="3">Interacts with RSS3. Forms a ternary complex with RSS3 and TIFY11A/JAZ9 in the nucleus.</text>
</comment>
<comment type="subcellular location">
    <subcellularLocation>
        <location evidence="1 3">Nucleus</location>
    </subcellularLocation>
</comment>
<comment type="similarity">
    <text>Belongs to the bHLH protein family.</text>
</comment>
<comment type="caution">
    <text evidence="1">Contains a degenerate basic motif not likely to bind DNA.</text>
</comment>
<comment type="sequence caution" evidence="5">
    <conflict type="erroneous gene model prediction">
        <sequence resource="EMBL-CDS" id="BAD30156"/>
    </conflict>
</comment>
<comment type="sequence caution" evidence="5">
    <conflict type="erroneous gene model prediction">
        <sequence resource="EMBL-CDS" id="BAF21022"/>
    </conflict>
</comment>
<comment type="sequence caution" evidence="5">
    <conflict type="erroneous gene model prediction">
        <sequence resource="EMBL-CDS" id="BAT00450"/>
    </conflict>
</comment>
<evidence type="ECO:0000255" key="1">
    <source>
        <dbReference type="PROSITE-ProRule" id="PRU00981"/>
    </source>
</evidence>
<evidence type="ECO:0000256" key="2">
    <source>
        <dbReference type="SAM" id="MobiDB-lite"/>
    </source>
</evidence>
<evidence type="ECO:0000269" key="3">
    <source>
    </source>
</evidence>
<evidence type="ECO:0000303" key="4">
    <source>
    </source>
</evidence>
<evidence type="ECO:0000305" key="5"/>
<evidence type="ECO:0000312" key="6">
    <source>
        <dbReference type="EMBL" id="BAD30156.1"/>
    </source>
</evidence>
<evidence type="ECO:0000312" key="7">
    <source>
        <dbReference type="EMBL" id="BAT00450.1"/>
    </source>
</evidence>
<sequence length="256" mass="27583">MDPAPSLAAELWRPHHHRHHFEASSVVTDQGSGSRGGGGSGRRRPRSDAGPEDDDLSKVVSTSAASGGGGGGGQDSDAPEAKRLKPMKSSDKNDSLRTEAGTDSGNSSKAADKNATPPEPPKQDYIHVRARRGQATDSHSLAERARREKISERMKILQDLVPGCNKVIGKASVLDEIINYIQSLQHQVEFLSMKLEAVNSHMINGIVAFPSKDFGAQPYNTAAGLTFDPQTTREFAQGSTSEWLHMQIGNAYERVT</sequence>
<keyword id="KW-0238">DNA-binding</keyword>
<keyword id="KW-0539">Nucleus</keyword>
<keyword id="KW-1185">Reference proteome</keyword>
<keyword id="KW-0804">Transcription</keyword>
<keyword id="KW-0805">Transcription regulation</keyword>
<dbReference type="EMBL" id="AP003743">
    <property type="protein sequence ID" value="BAD30156.1"/>
    <property type="status" value="ALT_SEQ"/>
    <property type="molecule type" value="Genomic_DNA"/>
</dbReference>
<dbReference type="EMBL" id="AP008213">
    <property type="protein sequence ID" value="BAF21022.2"/>
    <property type="status" value="ALT_SEQ"/>
    <property type="molecule type" value="Genomic_DNA"/>
</dbReference>
<dbReference type="EMBL" id="AP014963">
    <property type="protein sequence ID" value="BAT00450.1"/>
    <property type="status" value="ALT_SEQ"/>
    <property type="molecule type" value="Genomic_DNA"/>
</dbReference>
<dbReference type="SMR" id="Q69WS3"/>
<dbReference type="FunCoup" id="Q69WS3">
    <property type="interactions" value="741"/>
</dbReference>
<dbReference type="STRING" id="39947.Q69WS3"/>
<dbReference type="PaxDb" id="39947-Q69WS3"/>
<dbReference type="GeneID" id="4342637"/>
<dbReference type="KEGG" id="dosa:Os07g0193800"/>
<dbReference type="KEGG" id="osa:4342637"/>
<dbReference type="eggNOG" id="ENOG502QSEM">
    <property type="taxonomic scope" value="Eukaryota"/>
</dbReference>
<dbReference type="InParanoid" id="Q69WS3"/>
<dbReference type="OrthoDB" id="678327at2759"/>
<dbReference type="Proteomes" id="UP000000763">
    <property type="component" value="Chromosome 7"/>
</dbReference>
<dbReference type="Proteomes" id="UP000059680">
    <property type="component" value="Chromosome 7"/>
</dbReference>
<dbReference type="GO" id="GO:0005634">
    <property type="term" value="C:nucleus"/>
    <property type="evidence" value="ECO:0000318"/>
    <property type="project" value="GO_Central"/>
</dbReference>
<dbReference type="GO" id="GO:0003677">
    <property type="term" value="F:DNA binding"/>
    <property type="evidence" value="ECO:0007669"/>
    <property type="project" value="UniProtKB-KW"/>
</dbReference>
<dbReference type="GO" id="GO:0003700">
    <property type="term" value="F:DNA-binding transcription factor activity"/>
    <property type="evidence" value="ECO:0000318"/>
    <property type="project" value="GO_Central"/>
</dbReference>
<dbReference type="GO" id="GO:0046983">
    <property type="term" value="F:protein dimerization activity"/>
    <property type="evidence" value="ECO:0007669"/>
    <property type="project" value="InterPro"/>
</dbReference>
<dbReference type="GO" id="GO:0006355">
    <property type="term" value="P:regulation of DNA-templated transcription"/>
    <property type="evidence" value="ECO:0000305"/>
    <property type="project" value="Gramene"/>
</dbReference>
<dbReference type="CDD" id="cd18919">
    <property type="entry name" value="bHLH_AtBPE_like"/>
    <property type="match status" value="1"/>
</dbReference>
<dbReference type="FunFam" id="4.10.280.10:FF:000002">
    <property type="entry name" value="Basic helix-loop-helix transcription factor"/>
    <property type="match status" value="1"/>
</dbReference>
<dbReference type="Gene3D" id="4.10.280.10">
    <property type="entry name" value="Helix-loop-helix DNA-binding domain"/>
    <property type="match status" value="1"/>
</dbReference>
<dbReference type="InterPro" id="IPR011598">
    <property type="entry name" value="bHLH_dom"/>
</dbReference>
<dbReference type="InterPro" id="IPR024097">
    <property type="entry name" value="bHLH_ZIP_TF"/>
</dbReference>
<dbReference type="InterPro" id="IPR036638">
    <property type="entry name" value="HLH_DNA-bd_sf"/>
</dbReference>
<dbReference type="PANTHER" id="PTHR12565">
    <property type="entry name" value="STEROL REGULATORY ELEMENT-BINDING PROTEIN"/>
    <property type="match status" value="1"/>
</dbReference>
<dbReference type="PANTHER" id="PTHR12565:SF321">
    <property type="entry name" value="TRANSCRIPTION FACTOR BHLH089"/>
    <property type="match status" value="1"/>
</dbReference>
<dbReference type="Pfam" id="PF00010">
    <property type="entry name" value="HLH"/>
    <property type="match status" value="1"/>
</dbReference>
<dbReference type="SMART" id="SM00353">
    <property type="entry name" value="HLH"/>
    <property type="match status" value="1"/>
</dbReference>
<dbReference type="SUPFAM" id="SSF47459">
    <property type="entry name" value="HLH, helix-loop-helix DNA-binding domain"/>
    <property type="match status" value="1"/>
</dbReference>
<dbReference type="PROSITE" id="PS50888">
    <property type="entry name" value="BHLH"/>
    <property type="match status" value="1"/>
</dbReference>
<proteinExistence type="evidence at protein level"/>
<protein>
    <recommendedName>
        <fullName evidence="5">Transcription factor BHLH094</fullName>
    </recommendedName>
    <alternativeName>
        <fullName evidence="4">Basic helix-loop-helix protein 94</fullName>
        <shortName evidence="4">OsbHLH094</shortName>
    </alternativeName>
    <alternativeName>
        <fullName evidence="5">bHLH transcription factor bHLH094</fullName>
    </alternativeName>
</protein>
<organism>
    <name type="scientific">Oryza sativa subsp. japonica</name>
    <name type="common">Rice</name>
    <dbReference type="NCBI Taxonomy" id="39947"/>
    <lineage>
        <taxon>Eukaryota</taxon>
        <taxon>Viridiplantae</taxon>
        <taxon>Streptophyta</taxon>
        <taxon>Embryophyta</taxon>
        <taxon>Tracheophyta</taxon>
        <taxon>Spermatophyta</taxon>
        <taxon>Magnoliopsida</taxon>
        <taxon>Liliopsida</taxon>
        <taxon>Poales</taxon>
        <taxon>Poaceae</taxon>
        <taxon>BOP clade</taxon>
        <taxon>Oryzoideae</taxon>
        <taxon>Oryzeae</taxon>
        <taxon>Oryzinae</taxon>
        <taxon>Oryza</taxon>
        <taxon>Oryza sativa</taxon>
    </lineage>
</organism>
<accession>Q69WS3</accession>
<accession>A0A0N7KN27</accession>
<accession>Q0D801</accession>
<name>BH094_ORYSJ</name>